<name>RL31B_STRPF</name>
<sequence length="86" mass="9854">MRKDIHPDYRPVVFLDTTTGYQFLSGSTKASKETVEFEGETYPLIRVEISSDSHPFYTGRQKFTQADGRVDRFNKKYGLKDANAAK</sequence>
<comment type="subunit">
    <text evidence="1">Part of the 50S ribosomal subunit.</text>
</comment>
<comment type="similarity">
    <text evidence="1">Belongs to the bacterial ribosomal protein bL31 family. Type B subfamily.</text>
</comment>
<feature type="chain" id="PRO_0000259130" description="Large ribosomal subunit protein bL31B">
    <location>
        <begin position="1"/>
        <end position="86"/>
    </location>
</feature>
<protein>
    <recommendedName>
        <fullName evidence="1">Large ribosomal subunit protein bL31B</fullName>
    </recommendedName>
    <alternativeName>
        <fullName evidence="2">50S ribosomal protein L31 type B</fullName>
    </alternativeName>
</protein>
<keyword id="KW-0687">Ribonucleoprotein</keyword>
<keyword id="KW-0689">Ribosomal protein</keyword>
<organism>
    <name type="scientific">Streptococcus pyogenes serotype M4 (strain MGAS10750)</name>
    <dbReference type="NCBI Taxonomy" id="370554"/>
    <lineage>
        <taxon>Bacteria</taxon>
        <taxon>Bacillati</taxon>
        <taxon>Bacillota</taxon>
        <taxon>Bacilli</taxon>
        <taxon>Lactobacillales</taxon>
        <taxon>Streptococcaceae</taxon>
        <taxon>Streptococcus</taxon>
    </lineage>
</organism>
<proteinExistence type="inferred from homology"/>
<accession>Q1J7J5</accession>
<gene>
    <name evidence="1" type="primary">rpmE2</name>
    <name type="ordered locus">MGAS10750_Spy0629</name>
</gene>
<evidence type="ECO:0000255" key="1">
    <source>
        <dbReference type="HAMAP-Rule" id="MF_00502"/>
    </source>
</evidence>
<evidence type="ECO:0000305" key="2"/>
<dbReference type="EMBL" id="CP000262">
    <property type="protein sequence ID" value="ABF37579.1"/>
    <property type="molecule type" value="Genomic_DNA"/>
</dbReference>
<dbReference type="SMR" id="Q1J7J5"/>
<dbReference type="KEGG" id="spi:MGAS10750_Spy0629"/>
<dbReference type="HOGENOM" id="CLU_114306_2_1_9"/>
<dbReference type="Proteomes" id="UP000002434">
    <property type="component" value="Chromosome"/>
</dbReference>
<dbReference type="GO" id="GO:1990904">
    <property type="term" value="C:ribonucleoprotein complex"/>
    <property type="evidence" value="ECO:0007669"/>
    <property type="project" value="UniProtKB-KW"/>
</dbReference>
<dbReference type="GO" id="GO:0005840">
    <property type="term" value="C:ribosome"/>
    <property type="evidence" value="ECO:0007669"/>
    <property type="project" value="UniProtKB-KW"/>
</dbReference>
<dbReference type="GO" id="GO:0003735">
    <property type="term" value="F:structural constituent of ribosome"/>
    <property type="evidence" value="ECO:0007669"/>
    <property type="project" value="InterPro"/>
</dbReference>
<dbReference type="GO" id="GO:0006412">
    <property type="term" value="P:translation"/>
    <property type="evidence" value="ECO:0007669"/>
    <property type="project" value="UniProtKB-UniRule"/>
</dbReference>
<dbReference type="Gene3D" id="4.10.830.30">
    <property type="entry name" value="Ribosomal protein L31"/>
    <property type="match status" value="1"/>
</dbReference>
<dbReference type="HAMAP" id="MF_00502">
    <property type="entry name" value="Ribosomal_bL31_2"/>
    <property type="match status" value="1"/>
</dbReference>
<dbReference type="InterPro" id="IPR034704">
    <property type="entry name" value="Ribosomal_bL28/bL31-like_sf"/>
</dbReference>
<dbReference type="InterPro" id="IPR002150">
    <property type="entry name" value="Ribosomal_bL31"/>
</dbReference>
<dbReference type="InterPro" id="IPR027493">
    <property type="entry name" value="Ribosomal_bL31_B"/>
</dbReference>
<dbReference type="InterPro" id="IPR042105">
    <property type="entry name" value="Ribosomal_bL31_sf"/>
</dbReference>
<dbReference type="NCBIfam" id="TIGR00105">
    <property type="entry name" value="L31"/>
    <property type="match status" value="1"/>
</dbReference>
<dbReference type="NCBIfam" id="NF002462">
    <property type="entry name" value="PRK01678.1"/>
    <property type="match status" value="1"/>
</dbReference>
<dbReference type="PANTHER" id="PTHR33280">
    <property type="entry name" value="50S RIBOSOMAL PROTEIN L31, CHLOROPLASTIC"/>
    <property type="match status" value="1"/>
</dbReference>
<dbReference type="PANTHER" id="PTHR33280:SF1">
    <property type="entry name" value="LARGE RIBOSOMAL SUBUNIT PROTEIN BL31C"/>
    <property type="match status" value="1"/>
</dbReference>
<dbReference type="Pfam" id="PF01197">
    <property type="entry name" value="Ribosomal_L31"/>
    <property type="match status" value="1"/>
</dbReference>
<dbReference type="PRINTS" id="PR01249">
    <property type="entry name" value="RIBOSOMALL31"/>
</dbReference>
<dbReference type="SUPFAM" id="SSF143800">
    <property type="entry name" value="L28p-like"/>
    <property type="match status" value="1"/>
</dbReference>
<dbReference type="PROSITE" id="PS01143">
    <property type="entry name" value="RIBOSOMAL_L31"/>
    <property type="match status" value="1"/>
</dbReference>
<reference key="1">
    <citation type="journal article" date="2006" name="Proc. Natl. Acad. Sci. U.S.A.">
        <title>Molecular genetic anatomy of inter- and intraserotype variation in the human bacterial pathogen group A Streptococcus.</title>
        <authorList>
            <person name="Beres S.B."/>
            <person name="Richter E.W."/>
            <person name="Nagiec M.J."/>
            <person name="Sumby P."/>
            <person name="Porcella S.F."/>
            <person name="DeLeo F.R."/>
            <person name="Musser J.M."/>
        </authorList>
    </citation>
    <scope>NUCLEOTIDE SEQUENCE [LARGE SCALE GENOMIC DNA]</scope>
    <source>
        <strain>MGAS10750</strain>
    </source>
</reference>